<proteinExistence type="inferred from homology"/>
<sequence>MKQLPKTRTALLLAFLVIMWGVNWPLSKAALAYSPPLLFAGIRTLIGGLLLVIVALPRIHKLRLKETWPIYLVSALLNITLFYGLQTIGLNYLPAGLFSAIVFFQPVLMGVFSWLWLGESMFVMKVIGLILGFAGVAVISAAGFGGHISVIGVLLALGSAVSWALGTVYMKKTGSRVDSIWMVALQLTIGSVFLLISGFWTESFSAIQWTAPFITSLLFISVFVIALGWLVFFTLVGSGEASKVASYTFLIPLISIVASSIFLHEPLTLSLLAGLLLIVTSICLVNTKSKAQKAAAIGINEKAAQ</sequence>
<keyword id="KW-1003">Cell membrane</keyword>
<keyword id="KW-0472">Membrane</keyword>
<keyword id="KW-1185">Reference proteome</keyword>
<keyword id="KW-0677">Repeat</keyword>
<keyword id="KW-0812">Transmembrane</keyword>
<keyword id="KW-1133">Transmembrane helix</keyword>
<keyword id="KW-0813">Transport</keyword>
<dbReference type="EMBL" id="AL009126">
    <property type="protein sequence ID" value="CAB15405.1"/>
    <property type="molecule type" value="Genomic_DNA"/>
</dbReference>
<dbReference type="PIR" id="F70030">
    <property type="entry name" value="F70030"/>
</dbReference>
<dbReference type="RefSeq" id="WP_003243358.1">
    <property type="nucleotide sequence ID" value="NZ_OZ025638.1"/>
</dbReference>
<dbReference type="SMR" id="O32256"/>
<dbReference type="FunCoup" id="O32256">
    <property type="interactions" value="498"/>
</dbReference>
<dbReference type="STRING" id="224308.BSU34000"/>
<dbReference type="PaxDb" id="224308-BSU34000"/>
<dbReference type="EnsemblBacteria" id="CAB15405">
    <property type="protein sequence ID" value="CAB15405"/>
    <property type="gene ID" value="BSU_34000"/>
</dbReference>
<dbReference type="GeneID" id="936287"/>
<dbReference type="KEGG" id="bsu:BSU34000"/>
<dbReference type="PATRIC" id="fig|224308.179.peg.3686"/>
<dbReference type="eggNOG" id="COG0697">
    <property type="taxonomic scope" value="Bacteria"/>
</dbReference>
<dbReference type="InParanoid" id="O32256"/>
<dbReference type="OrthoDB" id="510638at2"/>
<dbReference type="PhylomeDB" id="O32256"/>
<dbReference type="BioCyc" id="BSUB:BSU34000-MONOMER"/>
<dbReference type="Proteomes" id="UP000001570">
    <property type="component" value="Chromosome"/>
</dbReference>
<dbReference type="GO" id="GO:0005886">
    <property type="term" value="C:plasma membrane"/>
    <property type="evidence" value="ECO:0007669"/>
    <property type="project" value="UniProtKB-SubCell"/>
</dbReference>
<dbReference type="InterPro" id="IPR050638">
    <property type="entry name" value="AA-Vitamin_Transporters"/>
</dbReference>
<dbReference type="InterPro" id="IPR000620">
    <property type="entry name" value="EamA_dom"/>
</dbReference>
<dbReference type="PANTHER" id="PTHR32322">
    <property type="entry name" value="INNER MEMBRANE TRANSPORTER"/>
    <property type="match status" value="1"/>
</dbReference>
<dbReference type="PANTHER" id="PTHR32322:SF18">
    <property type="entry name" value="S-ADENOSYLMETHIONINE_S-ADENOSYLHOMOCYSTEINE TRANSPORTER"/>
    <property type="match status" value="1"/>
</dbReference>
<dbReference type="Pfam" id="PF00892">
    <property type="entry name" value="EamA"/>
    <property type="match status" value="2"/>
</dbReference>
<dbReference type="SUPFAM" id="SSF103481">
    <property type="entry name" value="Multidrug resistance efflux transporter EmrE"/>
    <property type="match status" value="2"/>
</dbReference>
<name>YVBV_BACSU</name>
<comment type="subcellular location">
    <subcellularLocation>
        <location evidence="2">Cell membrane</location>
        <topology evidence="2">Multi-pass membrane protein</topology>
    </subcellularLocation>
</comment>
<comment type="similarity">
    <text evidence="2">Belongs to the EamA transporter family.</text>
</comment>
<organism>
    <name type="scientific">Bacillus subtilis (strain 168)</name>
    <dbReference type="NCBI Taxonomy" id="224308"/>
    <lineage>
        <taxon>Bacteria</taxon>
        <taxon>Bacillati</taxon>
        <taxon>Bacillota</taxon>
        <taxon>Bacilli</taxon>
        <taxon>Bacillales</taxon>
        <taxon>Bacillaceae</taxon>
        <taxon>Bacillus</taxon>
    </lineage>
</organism>
<feature type="chain" id="PRO_0000108185" description="Uncharacterized transporter YvbV">
    <location>
        <begin position="1"/>
        <end position="305"/>
    </location>
</feature>
<feature type="transmembrane region" description="Helical" evidence="1">
    <location>
        <begin position="11"/>
        <end position="31"/>
    </location>
</feature>
<feature type="transmembrane region" description="Helical" evidence="1">
    <location>
        <begin position="37"/>
        <end position="57"/>
    </location>
</feature>
<feature type="transmembrane region" description="Helical" evidence="1">
    <location>
        <begin position="70"/>
        <end position="90"/>
    </location>
</feature>
<feature type="transmembrane region" description="Helical" evidence="1">
    <location>
        <begin position="97"/>
        <end position="117"/>
    </location>
</feature>
<feature type="transmembrane region" description="Helical" evidence="1">
    <location>
        <begin position="126"/>
        <end position="146"/>
    </location>
</feature>
<feature type="transmembrane region" description="Helical" evidence="1">
    <location>
        <begin position="148"/>
        <end position="168"/>
    </location>
</feature>
<feature type="transmembrane region" description="Helical" evidence="1">
    <location>
        <begin position="180"/>
        <end position="200"/>
    </location>
</feature>
<feature type="transmembrane region" description="Helical" evidence="1">
    <location>
        <begin position="217"/>
        <end position="237"/>
    </location>
</feature>
<feature type="transmembrane region" description="Helical" evidence="1">
    <location>
        <begin position="244"/>
        <end position="264"/>
    </location>
</feature>
<feature type="transmembrane region" description="Helical" evidence="1">
    <location>
        <begin position="265"/>
        <end position="285"/>
    </location>
</feature>
<feature type="domain" description="EamA 1">
    <location>
        <begin position="18"/>
        <end position="141"/>
    </location>
</feature>
<feature type="domain" description="EamA 2">
    <location>
        <begin position="161"/>
        <end position="287"/>
    </location>
</feature>
<gene>
    <name type="primary">yvbV</name>
    <name type="ordered locus">BSU34000</name>
</gene>
<protein>
    <recommendedName>
        <fullName>Uncharacterized transporter YvbV</fullName>
    </recommendedName>
</protein>
<reference key="1">
    <citation type="journal article" date="1997" name="Nature">
        <title>The complete genome sequence of the Gram-positive bacterium Bacillus subtilis.</title>
        <authorList>
            <person name="Kunst F."/>
            <person name="Ogasawara N."/>
            <person name="Moszer I."/>
            <person name="Albertini A.M."/>
            <person name="Alloni G."/>
            <person name="Azevedo V."/>
            <person name="Bertero M.G."/>
            <person name="Bessieres P."/>
            <person name="Bolotin A."/>
            <person name="Borchert S."/>
            <person name="Borriss R."/>
            <person name="Boursier L."/>
            <person name="Brans A."/>
            <person name="Braun M."/>
            <person name="Brignell S.C."/>
            <person name="Bron S."/>
            <person name="Brouillet S."/>
            <person name="Bruschi C.V."/>
            <person name="Caldwell B."/>
            <person name="Capuano V."/>
            <person name="Carter N.M."/>
            <person name="Choi S.-K."/>
            <person name="Codani J.-J."/>
            <person name="Connerton I.F."/>
            <person name="Cummings N.J."/>
            <person name="Daniel R.A."/>
            <person name="Denizot F."/>
            <person name="Devine K.M."/>
            <person name="Duesterhoeft A."/>
            <person name="Ehrlich S.D."/>
            <person name="Emmerson P.T."/>
            <person name="Entian K.-D."/>
            <person name="Errington J."/>
            <person name="Fabret C."/>
            <person name="Ferrari E."/>
            <person name="Foulger D."/>
            <person name="Fritz C."/>
            <person name="Fujita M."/>
            <person name="Fujita Y."/>
            <person name="Fuma S."/>
            <person name="Galizzi A."/>
            <person name="Galleron N."/>
            <person name="Ghim S.-Y."/>
            <person name="Glaser P."/>
            <person name="Goffeau A."/>
            <person name="Golightly E.J."/>
            <person name="Grandi G."/>
            <person name="Guiseppi G."/>
            <person name="Guy B.J."/>
            <person name="Haga K."/>
            <person name="Haiech J."/>
            <person name="Harwood C.R."/>
            <person name="Henaut A."/>
            <person name="Hilbert H."/>
            <person name="Holsappel S."/>
            <person name="Hosono S."/>
            <person name="Hullo M.-F."/>
            <person name="Itaya M."/>
            <person name="Jones L.-M."/>
            <person name="Joris B."/>
            <person name="Karamata D."/>
            <person name="Kasahara Y."/>
            <person name="Klaerr-Blanchard M."/>
            <person name="Klein C."/>
            <person name="Kobayashi Y."/>
            <person name="Koetter P."/>
            <person name="Koningstein G."/>
            <person name="Krogh S."/>
            <person name="Kumano M."/>
            <person name="Kurita K."/>
            <person name="Lapidus A."/>
            <person name="Lardinois S."/>
            <person name="Lauber J."/>
            <person name="Lazarevic V."/>
            <person name="Lee S.-M."/>
            <person name="Levine A."/>
            <person name="Liu H."/>
            <person name="Masuda S."/>
            <person name="Mauel C."/>
            <person name="Medigue C."/>
            <person name="Medina N."/>
            <person name="Mellado R.P."/>
            <person name="Mizuno M."/>
            <person name="Moestl D."/>
            <person name="Nakai S."/>
            <person name="Noback M."/>
            <person name="Noone D."/>
            <person name="O'Reilly M."/>
            <person name="Ogawa K."/>
            <person name="Ogiwara A."/>
            <person name="Oudega B."/>
            <person name="Park S.-H."/>
            <person name="Parro V."/>
            <person name="Pohl T.M."/>
            <person name="Portetelle D."/>
            <person name="Porwollik S."/>
            <person name="Prescott A.M."/>
            <person name="Presecan E."/>
            <person name="Pujic P."/>
            <person name="Purnelle B."/>
            <person name="Rapoport G."/>
            <person name="Rey M."/>
            <person name="Reynolds S."/>
            <person name="Rieger M."/>
            <person name="Rivolta C."/>
            <person name="Rocha E."/>
            <person name="Roche B."/>
            <person name="Rose M."/>
            <person name="Sadaie Y."/>
            <person name="Sato T."/>
            <person name="Scanlan E."/>
            <person name="Schleich S."/>
            <person name="Schroeter R."/>
            <person name="Scoffone F."/>
            <person name="Sekiguchi J."/>
            <person name="Sekowska A."/>
            <person name="Seror S.J."/>
            <person name="Serror P."/>
            <person name="Shin B.-S."/>
            <person name="Soldo B."/>
            <person name="Sorokin A."/>
            <person name="Tacconi E."/>
            <person name="Takagi T."/>
            <person name="Takahashi H."/>
            <person name="Takemaru K."/>
            <person name="Takeuchi M."/>
            <person name="Tamakoshi A."/>
            <person name="Tanaka T."/>
            <person name="Terpstra P."/>
            <person name="Tognoni A."/>
            <person name="Tosato V."/>
            <person name="Uchiyama S."/>
            <person name="Vandenbol M."/>
            <person name="Vannier F."/>
            <person name="Vassarotti A."/>
            <person name="Viari A."/>
            <person name="Wambutt R."/>
            <person name="Wedler E."/>
            <person name="Wedler H."/>
            <person name="Weitzenegger T."/>
            <person name="Winters P."/>
            <person name="Wipat A."/>
            <person name="Yamamoto H."/>
            <person name="Yamane K."/>
            <person name="Yasumoto K."/>
            <person name="Yata K."/>
            <person name="Yoshida K."/>
            <person name="Yoshikawa H.-F."/>
            <person name="Zumstein E."/>
            <person name="Yoshikawa H."/>
            <person name="Danchin A."/>
        </authorList>
    </citation>
    <scope>NUCLEOTIDE SEQUENCE [LARGE SCALE GENOMIC DNA]</scope>
    <source>
        <strain>168</strain>
    </source>
</reference>
<accession>O32256</accession>
<evidence type="ECO:0000255" key="1"/>
<evidence type="ECO:0000305" key="2"/>